<feature type="chain" id="PRO_1000074312" description="tRNA sulfurtransferase">
    <location>
        <begin position="1"/>
        <end position="483"/>
    </location>
</feature>
<feature type="domain" description="THUMP" evidence="1">
    <location>
        <begin position="62"/>
        <end position="166"/>
    </location>
</feature>
<feature type="domain" description="Rhodanese" evidence="1">
    <location>
        <begin position="405"/>
        <end position="483"/>
    </location>
</feature>
<feature type="active site" description="Cysteine persulfide intermediate" evidence="1">
    <location>
        <position position="457"/>
    </location>
</feature>
<feature type="binding site" evidence="1">
    <location>
        <begin position="184"/>
        <end position="185"/>
    </location>
    <ligand>
        <name>ATP</name>
        <dbReference type="ChEBI" id="CHEBI:30616"/>
    </ligand>
</feature>
<feature type="binding site" evidence="1">
    <location>
        <position position="266"/>
    </location>
    <ligand>
        <name>ATP</name>
        <dbReference type="ChEBI" id="CHEBI:30616"/>
    </ligand>
</feature>
<feature type="binding site" evidence="1">
    <location>
        <position position="288"/>
    </location>
    <ligand>
        <name>ATP</name>
        <dbReference type="ChEBI" id="CHEBI:30616"/>
    </ligand>
</feature>
<feature type="binding site" evidence="1">
    <location>
        <position position="297"/>
    </location>
    <ligand>
        <name>ATP</name>
        <dbReference type="ChEBI" id="CHEBI:30616"/>
    </ligand>
</feature>
<feature type="disulfide bond" description="Redox-active" evidence="1">
    <location>
        <begin position="345"/>
        <end position="457"/>
    </location>
</feature>
<comment type="function">
    <text evidence="1">Catalyzes the ATP-dependent transfer of a sulfur to tRNA to produce 4-thiouridine in position 8 of tRNAs, which functions as a near-UV photosensor. Also catalyzes the transfer of sulfur to the sulfur carrier protein ThiS, forming ThiS-thiocarboxylate. This is a step in the synthesis of thiazole, in the thiamine biosynthesis pathway. The sulfur is donated as persulfide by IscS.</text>
</comment>
<comment type="catalytic activity">
    <reaction evidence="1">
        <text>[ThiI sulfur-carrier protein]-S-sulfanyl-L-cysteine + a uridine in tRNA + 2 reduced [2Fe-2S]-[ferredoxin] + ATP + H(+) = [ThiI sulfur-carrier protein]-L-cysteine + a 4-thiouridine in tRNA + 2 oxidized [2Fe-2S]-[ferredoxin] + AMP + diphosphate</text>
        <dbReference type="Rhea" id="RHEA:24176"/>
        <dbReference type="Rhea" id="RHEA-COMP:10000"/>
        <dbReference type="Rhea" id="RHEA-COMP:10001"/>
        <dbReference type="Rhea" id="RHEA-COMP:13337"/>
        <dbReference type="Rhea" id="RHEA-COMP:13338"/>
        <dbReference type="Rhea" id="RHEA-COMP:13339"/>
        <dbReference type="Rhea" id="RHEA-COMP:13340"/>
        <dbReference type="ChEBI" id="CHEBI:15378"/>
        <dbReference type="ChEBI" id="CHEBI:29950"/>
        <dbReference type="ChEBI" id="CHEBI:30616"/>
        <dbReference type="ChEBI" id="CHEBI:33019"/>
        <dbReference type="ChEBI" id="CHEBI:33737"/>
        <dbReference type="ChEBI" id="CHEBI:33738"/>
        <dbReference type="ChEBI" id="CHEBI:61963"/>
        <dbReference type="ChEBI" id="CHEBI:65315"/>
        <dbReference type="ChEBI" id="CHEBI:136798"/>
        <dbReference type="ChEBI" id="CHEBI:456215"/>
        <dbReference type="EC" id="2.8.1.4"/>
    </reaction>
</comment>
<comment type="catalytic activity">
    <reaction evidence="1">
        <text>[ThiS sulfur-carrier protein]-C-terminal Gly-Gly-AMP + S-sulfanyl-L-cysteinyl-[cysteine desulfurase] + AH2 = [ThiS sulfur-carrier protein]-C-terminal-Gly-aminoethanethioate + L-cysteinyl-[cysteine desulfurase] + A + AMP + 2 H(+)</text>
        <dbReference type="Rhea" id="RHEA:43340"/>
        <dbReference type="Rhea" id="RHEA-COMP:12157"/>
        <dbReference type="Rhea" id="RHEA-COMP:12158"/>
        <dbReference type="Rhea" id="RHEA-COMP:12910"/>
        <dbReference type="Rhea" id="RHEA-COMP:19908"/>
        <dbReference type="ChEBI" id="CHEBI:13193"/>
        <dbReference type="ChEBI" id="CHEBI:15378"/>
        <dbReference type="ChEBI" id="CHEBI:17499"/>
        <dbReference type="ChEBI" id="CHEBI:29950"/>
        <dbReference type="ChEBI" id="CHEBI:61963"/>
        <dbReference type="ChEBI" id="CHEBI:90618"/>
        <dbReference type="ChEBI" id="CHEBI:232372"/>
        <dbReference type="ChEBI" id="CHEBI:456215"/>
    </reaction>
</comment>
<comment type="pathway">
    <text evidence="1">Cofactor biosynthesis; thiamine diphosphate biosynthesis.</text>
</comment>
<comment type="subcellular location">
    <subcellularLocation>
        <location evidence="1">Cytoplasm</location>
    </subcellularLocation>
</comment>
<comment type="similarity">
    <text evidence="1">Belongs to the ThiI family.</text>
</comment>
<proteinExistence type="inferred from homology"/>
<evidence type="ECO:0000255" key="1">
    <source>
        <dbReference type="HAMAP-Rule" id="MF_00021"/>
    </source>
</evidence>
<protein>
    <recommendedName>
        <fullName evidence="1">tRNA sulfurtransferase</fullName>
        <ecNumber evidence="1">2.8.1.4</ecNumber>
    </recommendedName>
    <alternativeName>
        <fullName evidence="1">Sulfur carrier protein ThiS sulfurtransferase</fullName>
    </alternativeName>
    <alternativeName>
        <fullName evidence="1">Thiamine biosynthesis protein ThiI</fullName>
    </alternativeName>
    <alternativeName>
        <fullName evidence="1">tRNA 4-thiouridine synthase</fullName>
    </alternativeName>
</protein>
<dbReference type="EC" id="2.8.1.4" evidence="1"/>
<dbReference type="EMBL" id="CP000668">
    <property type="protein sequence ID" value="ABP41170.1"/>
    <property type="molecule type" value="Genomic_DNA"/>
</dbReference>
<dbReference type="RefSeq" id="WP_002208658.1">
    <property type="nucleotide sequence ID" value="NZ_CP009715.1"/>
</dbReference>
<dbReference type="SMR" id="A4TPF8"/>
<dbReference type="GeneID" id="57975539"/>
<dbReference type="KEGG" id="ypp:YPDSF_2808"/>
<dbReference type="PATRIC" id="fig|386656.14.peg.66"/>
<dbReference type="UniPathway" id="UPA00060"/>
<dbReference type="GO" id="GO:0005829">
    <property type="term" value="C:cytosol"/>
    <property type="evidence" value="ECO:0007669"/>
    <property type="project" value="TreeGrafter"/>
</dbReference>
<dbReference type="GO" id="GO:0005524">
    <property type="term" value="F:ATP binding"/>
    <property type="evidence" value="ECO:0007669"/>
    <property type="project" value="UniProtKB-UniRule"/>
</dbReference>
<dbReference type="GO" id="GO:0004810">
    <property type="term" value="F:CCA tRNA nucleotidyltransferase activity"/>
    <property type="evidence" value="ECO:0007669"/>
    <property type="project" value="InterPro"/>
</dbReference>
<dbReference type="GO" id="GO:0000049">
    <property type="term" value="F:tRNA binding"/>
    <property type="evidence" value="ECO:0007669"/>
    <property type="project" value="UniProtKB-UniRule"/>
</dbReference>
<dbReference type="GO" id="GO:0140741">
    <property type="term" value="F:tRNA-uracil-4 sulfurtransferase activity"/>
    <property type="evidence" value="ECO:0007669"/>
    <property type="project" value="UniProtKB-EC"/>
</dbReference>
<dbReference type="GO" id="GO:0009228">
    <property type="term" value="P:thiamine biosynthetic process"/>
    <property type="evidence" value="ECO:0007669"/>
    <property type="project" value="UniProtKB-KW"/>
</dbReference>
<dbReference type="GO" id="GO:0009229">
    <property type="term" value="P:thiamine diphosphate biosynthetic process"/>
    <property type="evidence" value="ECO:0007669"/>
    <property type="project" value="UniProtKB-UniRule"/>
</dbReference>
<dbReference type="GO" id="GO:0052837">
    <property type="term" value="P:thiazole biosynthetic process"/>
    <property type="evidence" value="ECO:0007669"/>
    <property type="project" value="InterPro"/>
</dbReference>
<dbReference type="GO" id="GO:0002937">
    <property type="term" value="P:tRNA 4-thiouridine biosynthesis"/>
    <property type="evidence" value="ECO:0007669"/>
    <property type="project" value="TreeGrafter"/>
</dbReference>
<dbReference type="CDD" id="cd01712">
    <property type="entry name" value="PPase_ThiI"/>
    <property type="match status" value="1"/>
</dbReference>
<dbReference type="CDD" id="cd00158">
    <property type="entry name" value="RHOD"/>
    <property type="match status" value="1"/>
</dbReference>
<dbReference type="CDD" id="cd11716">
    <property type="entry name" value="THUMP_ThiI"/>
    <property type="match status" value="1"/>
</dbReference>
<dbReference type="FunFam" id="3.30.2130.30:FF:000002">
    <property type="entry name" value="tRNA sulfurtransferase"/>
    <property type="match status" value="1"/>
</dbReference>
<dbReference type="FunFam" id="3.40.250.10:FF:000003">
    <property type="entry name" value="tRNA sulfurtransferase"/>
    <property type="match status" value="1"/>
</dbReference>
<dbReference type="FunFam" id="3.40.50.620:FF:000029">
    <property type="entry name" value="tRNA sulfurtransferase"/>
    <property type="match status" value="1"/>
</dbReference>
<dbReference type="Gene3D" id="3.30.2130.30">
    <property type="match status" value="1"/>
</dbReference>
<dbReference type="Gene3D" id="3.40.50.620">
    <property type="entry name" value="HUPs"/>
    <property type="match status" value="1"/>
</dbReference>
<dbReference type="Gene3D" id="3.40.250.10">
    <property type="entry name" value="Rhodanese-like domain"/>
    <property type="match status" value="1"/>
</dbReference>
<dbReference type="HAMAP" id="MF_00021">
    <property type="entry name" value="ThiI"/>
    <property type="match status" value="1"/>
</dbReference>
<dbReference type="InterPro" id="IPR001763">
    <property type="entry name" value="Rhodanese-like_dom"/>
</dbReference>
<dbReference type="InterPro" id="IPR036873">
    <property type="entry name" value="Rhodanese-like_dom_sf"/>
</dbReference>
<dbReference type="InterPro" id="IPR014729">
    <property type="entry name" value="Rossmann-like_a/b/a_fold"/>
</dbReference>
<dbReference type="InterPro" id="IPR020536">
    <property type="entry name" value="ThiI_AANH"/>
</dbReference>
<dbReference type="InterPro" id="IPR054173">
    <property type="entry name" value="ThiI_fer"/>
</dbReference>
<dbReference type="InterPro" id="IPR049961">
    <property type="entry name" value="ThiI_N"/>
</dbReference>
<dbReference type="InterPro" id="IPR026340">
    <property type="entry name" value="THII_Thiazole_biosynth_dom"/>
</dbReference>
<dbReference type="InterPro" id="IPR004114">
    <property type="entry name" value="THUMP_dom"/>
</dbReference>
<dbReference type="InterPro" id="IPR049962">
    <property type="entry name" value="THUMP_ThiI"/>
</dbReference>
<dbReference type="InterPro" id="IPR003720">
    <property type="entry name" value="tRNA_STrfase"/>
</dbReference>
<dbReference type="InterPro" id="IPR050102">
    <property type="entry name" value="tRNA_sulfurtransferase_ThiI"/>
</dbReference>
<dbReference type="NCBIfam" id="TIGR04271">
    <property type="entry name" value="ThiI_C_thiazole"/>
    <property type="match status" value="1"/>
</dbReference>
<dbReference type="NCBIfam" id="TIGR00342">
    <property type="entry name" value="tRNA uracil 4-sulfurtransferase ThiI"/>
    <property type="match status" value="1"/>
</dbReference>
<dbReference type="PANTHER" id="PTHR43209">
    <property type="entry name" value="TRNA SULFURTRANSFERASE"/>
    <property type="match status" value="1"/>
</dbReference>
<dbReference type="PANTHER" id="PTHR43209:SF1">
    <property type="entry name" value="TRNA SULFURTRANSFERASE"/>
    <property type="match status" value="1"/>
</dbReference>
<dbReference type="Pfam" id="PF00581">
    <property type="entry name" value="Rhodanese"/>
    <property type="match status" value="1"/>
</dbReference>
<dbReference type="Pfam" id="PF02568">
    <property type="entry name" value="ThiI"/>
    <property type="match status" value="1"/>
</dbReference>
<dbReference type="Pfam" id="PF22025">
    <property type="entry name" value="ThiI_fer"/>
    <property type="match status" value="1"/>
</dbReference>
<dbReference type="Pfam" id="PF02926">
    <property type="entry name" value="THUMP"/>
    <property type="match status" value="1"/>
</dbReference>
<dbReference type="SMART" id="SM00981">
    <property type="entry name" value="THUMP"/>
    <property type="match status" value="1"/>
</dbReference>
<dbReference type="SUPFAM" id="SSF52402">
    <property type="entry name" value="Adenine nucleotide alpha hydrolases-like"/>
    <property type="match status" value="1"/>
</dbReference>
<dbReference type="SUPFAM" id="SSF52821">
    <property type="entry name" value="Rhodanese/Cell cycle control phosphatase"/>
    <property type="match status" value="1"/>
</dbReference>
<dbReference type="SUPFAM" id="SSF143437">
    <property type="entry name" value="THUMP domain-like"/>
    <property type="match status" value="1"/>
</dbReference>
<dbReference type="PROSITE" id="PS50206">
    <property type="entry name" value="RHODANESE_3"/>
    <property type="match status" value="1"/>
</dbReference>
<dbReference type="PROSITE" id="PS51165">
    <property type="entry name" value="THUMP"/>
    <property type="match status" value="1"/>
</dbReference>
<keyword id="KW-0067">ATP-binding</keyword>
<keyword id="KW-0963">Cytoplasm</keyword>
<keyword id="KW-1015">Disulfide bond</keyword>
<keyword id="KW-0547">Nucleotide-binding</keyword>
<keyword id="KW-0676">Redox-active center</keyword>
<keyword id="KW-0694">RNA-binding</keyword>
<keyword id="KW-0784">Thiamine biosynthesis</keyword>
<keyword id="KW-0808">Transferase</keyword>
<keyword id="KW-0820">tRNA-binding</keyword>
<sequence length="483" mass="54894">MKFIIKLFPEITIKSQSVRLRFIKILTTNIRNVLKHLEDDTLAIVRHWDHIELRTKDDNLGPEICDALTRIPGIHHILEVEDRSYSDMHNIFEQTLEAYRETLVGKTFCVRVKRRGKHEFSSGDVERYVGGGLNQHIESAKVNLTRPQVTVNLEVDQDKLILVKARHEGLGGFPIGTQEDVLSLISGGFDSGVSSYMLMRRGCRVHYCFFNLGGSAHEIGVKQVAHYLWNRFGSSHRVRFIAIDFEPVVGEILEKVEDGQMGVVLKRMMVRAASQVAERYGVQALVTGEALGQVSSQTLTNLRLIDNASDTLILRPLISHDKEHIINLARQIGTEDFAKTMPEYCGVISKSPTVKAVKAKIEEEESHFDFSILDRVVSEAKNVDIREIAQQSREQVVEVETVAELADTDVLLDIRAPDEQEEKPLKLDQVEVRSLPFYKLSSQFADLDQSKTYLLYCDRGVMSRLQALYLREQGYTNVKVYRP</sequence>
<reference key="1">
    <citation type="submission" date="2007-02" db="EMBL/GenBank/DDBJ databases">
        <title>Complete sequence of chromosome of Yersinia pestis Pestoides F.</title>
        <authorList>
            <consortium name="US DOE Joint Genome Institute"/>
            <person name="Copeland A."/>
            <person name="Lucas S."/>
            <person name="Lapidus A."/>
            <person name="Barry K."/>
            <person name="Detter J.C."/>
            <person name="Glavina del Rio T."/>
            <person name="Hammon N."/>
            <person name="Israni S."/>
            <person name="Dalin E."/>
            <person name="Tice H."/>
            <person name="Pitluck S."/>
            <person name="Di Bartolo G."/>
            <person name="Chain P."/>
            <person name="Malfatti S."/>
            <person name="Shin M."/>
            <person name="Vergez L."/>
            <person name="Schmutz J."/>
            <person name="Larimer F."/>
            <person name="Land M."/>
            <person name="Hauser L."/>
            <person name="Worsham P."/>
            <person name="Chu M."/>
            <person name="Bearden S."/>
            <person name="Garcia E."/>
            <person name="Richardson P."/>
        </authorList>
    </citation>
    <scope>NUCLEOTIDE SEQUENCE [LARGE SCALE GENOMIC DNA]</scope>
    <source>
        <strain>Pestoides F</strain>
    </source>
</reference>
<gene>
    <name evidence="1" type="primary">thiI</name>
    <name type="ordered locus">YPDSF_2808</name>
</gene>
<accession>A4TPF8</accession>
<organism>
    <name type="scientific">Yersinia pestis (strain Pestoides F)</name>
    <dbReference type="NCBI Taxonomy" id="386656"/>
    <lineage>
        <taxon>Bacteria</taxon>
        <taxon>Pseudomonadati</taxon>
        <taxon>Pseudomonadota</taxon>
        <taxon>Gammaproteobacteria</taxon>
        <taxon>Enterobacterales</taxon>
        <taxon>Yersiniaceae</taxon>
        <taxon>Yersinia</taxon>
    </lineage>
</organism>
<name>THII_YERPP</name>